<feature type="chain" id="PRO_0000058094" description="Dolichyl-diphosphooligosaccharide--protein glycosyltransferase 48 kDa subunit">
    <location>
        <begin position="1"/>
        <end position="413"/>
    </location>
</feature>
<feature type="topological domain" description="Lumenal" evidence="4">
    <location>
        <begin position="1"/>
        <end position="383"/>
    </location>
</feature>
<feature type="transmembrane region" description="Helical" evidence="4">
    <location>
        <begin position="384"/>
        <end position="404"/>
    </location>
</feature>
<feature type="topological domain" description="Cytoplasmic" evidence="4">
    <location>
        <begin position="405"/>
        <end position="413"/>
    </location>
</feature>
<evidence type="ECO:0000250" key="1">
    <source>
        <dbReference type="UniProtKB" id="P39656"/>
    </source>
</evidence>
<evidence type="ECO:0000250" key="2">
    <source>
        <dbReference type="UniProtKB" id="Q05052"/>
    </source>
</evidence>
<evidence type="ECO:0000250" key="3">
    <source>
        <dbReference type="UniProtKB" id="Q29381"/>
    </source>
</evidence>
<evidence type="ECO:0000255" key="4"/>
<evidence type="ECO:0000269" key="5">
    <source>
    </source>
</evidence>
<evidence type="ECO:0000305" key="6"/>
<gene>
    <name evidence="1" type="primary">DDOST</name>
    <name type="synonym">OST48</name>
</gene>
<comment type="function">
    <text evidence="1 2">Subunit of the oligosaccharyl transferase (OST) complex that catalyzes the initial transfer of a defined glycan (Glc(3)Man(9)GlcNAc(2) in eukaryotes) from the lipid carrier dolichol-pyrophosphate to an asparagine residue within an Asn-X-Ser/Thr consensus motif in nascent polypeptide chains, the first step in protein N-glycosylation (By similarity). N-glycosylation occurs cotranslationally and the complex associates with the Sec61 complex at the channel-forming translocon complex that mediates protein translocation across the endoplasmic reticulum (ER). All subunits are required for a maximal enzyme activity (By similarity). Required for the assembly of both SST3A- and SS3B-containing OST complexes (By similarity).</text>
</comment>
<comment type="pathway">
    <text evidence="1">Protein modification; protein glycosylation.</text>
</comment>
<comment type="subunit">
    <text evidence="2">Component of the oligosaccharyltransferase (OST) complex.</text>
</comment>
<comment type="subcellular location">
    <subcellularLocation>
        <location evidence="5">Endoplasmic reticulum</location>
    </subcellularLocation>
    <subcellularLocation>
        <location evidence="3">Endoplasmic reticulum membrane</location>
        <topology evidence="3">Single-pass type I membrane protein</topology>
    </subcellularLocation>
</comment>
<comment type="similarity">
    <text evidence="6">Belongs to the DDOST 48 kDa subunit family.</text>
</comment>
<organism>
    <name type="scientific">Gallus gallus</name>
    <name type="common">Chicken</name>
    <dbReference type="NCBI Taxonomy" id="9031"/>
    <lineage>
        <taxon>Eukaryota</taxon>
        <taxon>Metazoa</taxon>
        <taxon>Chordata</taxon>
        <taxon>Craniata</taxon>
        <taxon>Vertebrata</taxon>
        <taxon>Euteleostomi</taxon>
        <taxon>Archelosauria</taxon>
        <taxon>Archosauria</taxon>
        <taxon>Dinosauria</taxon>
        <taxon>Saurischia</taxon>
        <taxon>Theropoda</taxon>
        <taxon>Coelurosauria</taxon>
        <taxon>Aves</taxon>
        <taxon>Neognathae</taxon>
        <taxon>Galloanserae</taxon>
        <taxon>Galliformes</taxon>
        <taxon>Phasianidae</taxon>
        <taxon>Phasianinae</taxon>
        <taxon>Gallus</taxon>
    </lineage>
</organism>
<reference key="1">
    <citation type="journal article" date="1994" name="J. Biol. Chem.">
        <title>Purification and characterization of avian oligosaccharyltransferase. Complete amino acid sequence of the 50-kDa subunit.</title>
        <authorList>
            <person name="Kumar V."/>
            <person name="Heinemann F.S."/>
            <person name="Ozols J."/>
        </authorList>
    </citation>
    <scope>PROTEIN SEQUENCE</scope>
    <scope>SUBCELLULAR LOCATION</scope>
    <source>
        <tissue>Oviduct</tissue>
    </source>
</reference>
<dbReference type="PIR" id="A54127">
    <property type="entry name" value="A54127"/>
</dbReference>
<dbReference type="SMR" id="P48440"/>
<dbReference type="FunCoup" id="P48440">
    <property type="interactions" value="2806"/>
</dbReference>
<dbReference type="STRING" id="9031.ENSGALP00000038313"/>
<dbReference type="PaxDb" id="9031-ENSGALP00000038313"/>
<dbReference type="VEuPathDB" id="HostDB:geneid_425542"/>
<dbReference type="eggNOG" id="KOG2754">
    <property type="taxonomic scope" value="Eukaryota"/>
</dbReference>
<dbReference type="InParanoid" id="P48440"/>
<dbReference type="OrthoDB" id="29105at2759"/>
<dbReference type="PhylomeDB" id="P48440"/>
<dbReference type="UniPathway" id="UPA00378"/>
<dbReference type="Proteomes" id="UP000000539">
    <property type="component" value="Unassembled WGS sequence"/>
</dbReference>
<dbReference type="GO" id="GO:0008250">
    <property type="term" value="C:oligosaccharyltransferase complex"/>
    <property type="evidence" value="ECO:0000250"/>
    <property type="project" value="UniProtKB"/>
</dbReference>
<dbReference type="GO" id="GO:0006486">
    <property type="term" value="P:protein glycosylation"/>
    <property type="evidence" value="ECO:0000250"/>
    <property type="project" value="UniProtKB"/>
</dbReference>
<dbReference type="GO" id="GO:0018279">
    <property type="term" value="P:protein N-linked glycosylation via asparagine"/>
    <property type="evidence" value="ECO:0000318"/>
    <property type="project" value="GO_Central"/>
</dbReference>
<dbReference type="InterPro" id="IPR005013">
    <property type="entry name" value="DDOST_48_kDa_subunit"/>
</dbReference>
<dbReference type="InterPro" id="IPR055459">
    <property type="entry name" value="OST48_MD"/>
</dbReference>
<dbReference type="InterPro" id="IPR055457">
    <property type="entry name" value="OST48_N"/>
</dbReference>
<dbReference type="PANTHER" id="PTHR10830">
    <property type="entry name" value="DOLICHYL-DIPHOSPHOOLIGOSACCHARIDE--PROTEIN GLYCOSYLTRANSFERASE 48 KDA SUBUNIT"/>
    <property type="match status" value="1"/>
</dbReference>
<dbReference type="PANTHER" id="PTHR10830:SF0">
    <property type="entry name" value="DOLICHYL-DIPHOSPHOOLIGOSACCHARIDE--PROTEIN GLYCOSYLTRANSFERASE 48 KDA SUBUNIT"/>
    <property type="match status" value="1"/>
</dbReference>
<dbReference type="Pfam" id="PF23358">
    <property type="entry name" value="OST48_MD"/>
    <property type="match status" value="1"/>
</dbReference>
<dbReference type="Pfam" id="PF03345">
    <property type="entry name" value="OST48_N"/>
    <property type="match status" value="1"/>
</dbReference>
<protein>
    <recommendedName>
        <fullName evidence="1">Dolichyl-diphosphooligosaccharide--protein glycosyltransferase 48 kDa subunit</fullName>
        <shortName>DDOST 48 kDa subunit</shortName>
        <shortName>Oligosaccharyl transferase 48 kDa subunit</shortName>
    </recommendedName>
    <alternativeName>
        <fullName>OST 50 kDa subunit</fullName>
    </alternativeName>
</protein>
<sequence length="413" mass="45912">GPRSLVLLENLNLRDTHSLFFRSLADRGFELTFRTADDAGLSLIKYGEFLYDNLIIFSPSIEDFGGNINVETITAFIDGGGSVLVAASSDIGDPLRELGSECGIEFDEERTAVIDHHNYDISDPGQHTLIVADAENLLKAPTIVGKKALNPILFRGVGMVADPDNPLVLDILTGSSTSYSFFPDKPITQYPHAVGKNTLLIAGLQARNNARVVFSGSLDFFSDAFFSSAVQKAAPGSKRYSQTGNYELAVALSRWVFKEEGVLRVGAVSHHRVGELAPPNAYTVTDLVEYSIVIEKLSDGKWIPFDGDDIQLEFVRIDPFVRTFLKRNGGKYSVQFKLPDVYGVFQFKVDYNRLGYTHLYSSTQVSVRPLQHTQYERFIPSAYPYYAGAFSMMVGLFMFSIVFLHMKEKEKSD</sequence>
<keyword id="KW-0903">Direct protein sequencing</keyword>
<keyword id="KW-0256">Endoplasmic reticulum</keyword>
<keyword id="KW-0472">Membrane</keyword>
<keyword id="KW-1185">Reference proteome</keyword>
<keyword id="KW-0812">Transmembrane</keyword>
<keyword id="KW-1133">Transmembrane helix</keyword>
<proteinExistence type="evidence at protein level"/>
<name>OST48_CHICK</name>
<accession>P48440</accession>